<keyword id="KW-0002">3D-structure</keyword>
<keyword id="KW-0067">ATP-binding</keyword>
<keyword id="KW-0456">Lyase</keyword>
<keyword id="KW-0520">NAD</keyword>
<keyword id="KW-0521">NADP</keyword>
<keyword id="KW-0547">Nucleotide-binding</keyword>
<keyword id="KW-1185">Reference proteome</keyword>
<evidence type="ECO:0000255" key="1">
    <source>
        <dbReference type="HAMAP-Rule" id="MF_01965"/>
    </source>
</evidence>
<evidence type="ECO:0000269" key="2">
    <source>
    </source>
</evidence>
<evidence type="ECO:0000269" key="3">
    <source>
    </source>
</evidence>
<evidence type="ECO:0000305" key="4">
    <source>
    </source>
</evidence>
<evidence type="ECO:0007744" key="5">
    <source>
        <dbReference type="PDB" id="1KYH"/>
    </source>
</evidence>
<evidence type="ECO:0007744" key="6">
    <source>
        <dbReference type="PDB" id="3RPH"/>
    </source>
</evidence>
<evidence type="ECO:0007744" key="7">
    <source>
        <dbReference type="PDB" id="3RPZ"/>
    </source>
</evidence>
<evidence type="ECO:0007744" key="8">
    <source>
        <dbReference type="PDB" id="3RQ2"/>
    </source>
</evidence>
<evidence type="ECO:0007744" key="9">
    <source>
        <dbReference type="PDB" id="3RQ5"/>
    </source>
</evidence>
<evidence type="ECO:0007744" key="10">
    <source>
        <dbReference type="PDB" id="3RQ6"/>
    </source>
</evidence>
<evidence type="ECO:0007744" key="11">
    <source>
        <dbReference type="PDB" id="3RQ8"/>
    </source>
</evidence>
<evidence type="ECO:0007744" key="12">
    <source>
        <dbReference type="PDB" id="3RQH"/>
    </source>
</evidence>
<evidence type="ECO:0007744" key="13">
    <source>
        <dbReference type="PDB" id="3RQQ"/>
    </source>
</evidence>
<evidence type="ECO:0007744" key="14">
    <source>
        <dbReference type="PDB" id="3RQX"/>
    </source>
</evidence>
<evidence type="ECO:0007829" key="15">
    <source>
        <dbReference type="PDB" id="1KYH"/>
    </source>
</evidence>
<evidence type="ECO:0007829" key="16">
    <source>
        <dbReference type="PDB" id="3RPZ"/>
    </source>
</evidence>
<evidence type="ECO:0007829" key="17">
    <source>
        <dbReference type="PDB" id="3RQ8"/>
    </source>
</evidence>
<evidence type="ECO:0007829" key="18">
    <source>
        <dbReference type="PDB" id="3RQQ"/>
    </source>
</evidence>
<sequence length="276" mass="29870">MNVPFWTEEHVRATLPERDAESHKGTYGTALLLAGSDDMPGAALLAGLGAMRSGLGKLVIGTSENVIPLIVPVLPEATYWRDGWKKAADAQLEETYRAIAIGPGLPQTESVQQAVDHVLTADCPVILDAGALAKRTYPKREGPVILTPHPGEFFRMTGVPVNELQKKRAEYAKEWAAQLQTVIVLKGNQTVIAFPDGDCWLNPTGNGALAKGGTGDTLTGMILGMLCCHEDPKHAVLNAVYLHGACAELWTDEHSAHTLLAHELSDILPRVWKRFE</sequence>
<reference key="1">
    <citation type="journal article" date="1996" name="Microbiology">
        <title>Sequencing of a 65 kb region of the Bacillus subtilis genome containing the lic and cel loci, and creation of a 177 kb contig covering the gnt-sacXY region.</title>
        <authorList>
            <person name="Yoshida K."/>
            <person name="Shindo K."/>
            <person name="Sano H."/>
            <person name="Seki S."/>
            <person name="Fujimura M."/>
            <person name="Yanai N."/>
            <person name="Miwa Y."/>
            <person name="Fujita Y."/>
        </authorList>
    </citation>
    <scope>NUCLEOTIDE SEQUENCE [GENOMIC DNA]</scope>
    <source>
        <strain>168 / BGSC1A1</strain>
    </source>
</reference>
<reference key="2">
    <citation type="journal article" date="1997" name="Nature">
        <title>The complete genome sequence of the Gram-positive bacterium Bacillus subtilis.</title>
        <authorList>
            <person name="Kunst F."/>
            <person name="Ogasawara N."/>
            <person name="Moszer I."/>
            <person name="Albertini A.M."/>
            <person name="Alloni G."/>
            <person name="Azevedo V."/>
            <person name="Bertero M.G."/>
            <person name="Bessieres P."/>
            <person name="Bolotin A."/>
            <person name="Borchert S."/>
            <person name="Borriss R."/>
            <person name="Boursier L."/>
            <person name="Brans A."/>
            <person name="Braun M."/>
            <person name="Brignell S.C."/>
            <person name="Bron S."/>
            <person name="Brouillet S."/>
            <person name="Bruschi C.V."/>
            <person name="Caldwell B."/>
            <person name="Capuano V."/>
            <person name="Carter N.M."/>
            <person name="Choi S.-K."/>
            <person name="Codani J.-J."/>
            <person name="Connerton I.F."/>
            <person name="Cummings N.J."/>
            <person name="Daniel R.A."/>
            <person name="Denizot F."/>
            <person name="Devine K.M."/>
            <person name="Duesterhoeft A."/>
            <person name="Ehrlich S.D."/>
            <person name="Emmerson P.T."/>
            <person name="Entian K.-D."/>
            <person name="Errington J."/>
            <person name="Fabret C."/>
            <person name="Ferrari E."/>
            <person name="Foulger D."/>
            <person name="Fritz C."/>
            <person name="Fujita M."/>
            <person name="Fujita Y."/>
            <person name="Fuma S."/>
            <person name="Galizzi A."/>
            <person name="Galleron N."/>
            <person name="Ghim S.-Y."/>
            <person name="Glaser P."/>
            <person name="Goffeau A."/>
            <person name="Golightly E.J."/>
            <person name="Grandi G."/>
            <person name="Guiseppi G."/>
            <person name="Guy B.J."/>
            <person name="Haga K."/>
            <person name="Haiech J."/>
            <person name="Harwood C.R."/>
            <person name="Henaut A."/>
            <person name="Hilbert H."/>
            <person name="Holsappel S."/>
            <person name="Hosono S."/>
            <person name="Hullo M.-F."/>
            <person name="Itaya M."/>
            <person name="Jones L.-M."/>
            <person name="Joris B."/>
            <person name="Karamata D."/>
            <person name="Kasahara Y."/>
            <person name="Klaerr-Blanchard M."/>
            <person name="Klein C."/>
            <person name="Kobayashi Y."/>
            <person name="Koetter P."/>
            <person name="Koningstein G."/>
            <person name="Krogh S."/>
            <person name="Kumano M."/>
            <person name="Kurita K."/>
            <person name="Lapidus A."/>
            <person name="Lardinois S."/>
            <person name="Lauber J."/>
            <person name="Lazarevic V."/>
            <person name="Lee S.-M."/>
            <person name="Levine A."/>
            <person name="Liu H."/>
            <person name="Masuda S."/>
            <person name="Mauel C."/>
            <person name="Medigue C."/>
            <person name="Medina N."/>
            <person name="Mellado R.P."/>
            <person name="Mizuno M."/>
            <person name="Moestl D."/>
            <person name="Nakai S."/>
            <person name="Noback M."/>
            <person name="Noone D."/>
            <person name="O'Reilly M."/>
            <person name="Ogawa K."/>
            <person name="Ogiwara A."/>
            <person name="Oudega B."/>
            <person name="Park S.-H."/>
            <person name="Parro V."/>
            <person name="Pohl T.M."/>
            <person name="Portetelle D."/>
            <person name="Porwollik S."/>
            <person name="Prescott A.M."/>
            <person name="Presecan E."/>
            <person name="Pujic P."/>
            <person name="Purnelle B."/>
            <person name="Rapoport G."/>
            <person name="Rey M."/>
            <person name="Reynolds S."/>
            <person name="Rieger M."/>
            <person name="Rivolta C."/>
            <person name="Rocha E."/>
            <person name="Roche B."/>
            <person name="Rose M."/>
            <person name="Sadaie Y."/>
            <person name="Sato T."/>
            <person name="Scanlan E."/>
            <person name="Schleich S."/>
            <person name="Schroeter R."/>
            <person name="Scoffone F."/>
            <person name="Sekiguchi J."/>
            <person name="Sekowska A."/>
            <person name="Seror S.J."/>
            <person name="Serror P."/>
            <person name="Shin B.-S."/>
            <person name="Soldo B."/>
            <person name="Sorokin A."/>
            <person name="Tacconi E."/>
            <person name="Takagi T."/>
            <person name="Takahashi H."/>
            <person name="Takemaru K."/>
            <person name="Takeuchi M."/>
            <person name="Tamakoshi A."/>
            <person name="Tanaka T."/>
            <person name="Terpstra P."/>
            <person name="Tognoni A."/>
            <person name="Tosato V."/>
            <person name="Uchiyama S."/>
            <person name="Vandenbol M."/>
            <person name="Vannier F."/>
            <person name="Vassarotti A."/>
            <person name="Viari A."/>
            <person name="Wambutt R."/>
            <person name="Wedler E."/>
            <person name="Wedler H."/>
            <person name="Weitzenegger T."/>
            <person name="Winters P."/>
            <person name="Wipat A."/>
            <person name="Yamamoto H."/>
            <person name="Yamane K."/>
            <person name="Yasumoto K."/>
            <person name="Yata K."/>
            <person name="Yoshida K."/>
            <person name="Yoshikawa H.-F."/>
            <person name="Zumstein E."/>
            <person name="Yoshikawa H."/>
            <person name="Danchin A."/>
        </authorList>
    </citation>
    <scope>NUCLEOTIDE SEQUENCE [LARGE SCALE GENOMIC DNA]</scope>
    <source>
        <strain>168</strain>
    </source>
</reference>
<reference evidence="5" key="3">
    <citation type="journal article" date="2002" name="J. Struct. Biol.">
        <title>Structure of Bacillus subtilis YXKO--a member of the UPF0031 family and a putative kinase.</title>
        <authorList>
            <person name="Zhang R.G."/>
            <person name="Grembecka J."/>
            <person name="Vinokour E."/>
            <person name="Collart F."/>
            <person name="Dementieva I."/>
            <person name="Minor W."/>
            <person name="Joachimiak A."/>
        </authorList>
    </citation>
    <scope>X-RAY CRYSTALLOGRAPHY (1.6 ANGSTROMS)</scope>
    <scope>SUBUNIT</scope>
</reference>
<reference evidence="6 7 8 9 10 11 12 13 14" key="4">
    <citation type="journal article" date="2012" name="Structure">
        <title>Identification of unknown protein function using metabolite cocktail screening.</title>
        <authorList>
            <person name="Shumilin I.A."/>
            <person name="Cymborowski M."/>
            <person name="Chertihin O."/>
            <person name="Jha K.N."/>
            <person name="Herr J.C."/>
            <person name="Lesley S.A."/>
            <person name="Joachimiak A."/>
            <person name="Minor W."/>
        </authorList>
    </citation>
    <scope>X-RAY CRYSTALLOGRAPHY (1.51 ANGSTROMS) IN COMPLEXES WITH AMP; NAD; NADPHX AND MAGNESIUM</scope>
    <scope>FUNCTION</scope>
    <scope>CATALYTIC ACTIVITY</scope>
    <scope>COFACTOR</scope>
    <scope>BIOPHYSICOCHEMICAL PROPERTIES</scope>
</reference>
<dbReference type="EC" id="4.2.1.136" evidence="1"/>
<dbReference type="EMBL" id="D83026">
    <property type="protein sequence ID" value="BAA11731.1"/>
    <property type="molecule type" value="Genomic_DNA"/>
</dbReference>
<dbReference type="EMBL" id="AL009126">
    <property type="protein sequence ID" value="CAB15898.1"/>
    <property type="molecule type" value="Genomic_DNA"/>
</dbReference>
<dbReference type="PIR" id="D70081">
    <property type="entry name" value="D70081"/>
</dbReference>
<dbReference type="RefSeq" id="WP_003244033.1">
    <property type="nucleotide sequence ID" value="NZ_OZ025638.1"/>
</dbReference>
<dbReference type="PDB" id="1KYH">
    <property type="method" value="X-ray"/>
    <property type="resolution" value="1.60 A"/>
    <property type="chains" value="A=1-276"/>
</dbReference>
<dbReference type="PDB" id="3RPH">
    <property type="method" value="X-ray"/>
    <property type="resolution" value="1.75 A"/>
    <property type="chains" value="A=1-276"/>
</dbReference>
<dbReference type="PDB" id="3RPZ">
    <property type="method" value="X-ray"/>
    <property type="resolution" value="1.51 A"/>
    <property type="chains" value="A=1-276"/>
</dbReference>
<dbReference type="PDB" id="3RQ2">
    <property type="method" value="X-ray"/>
    <property type="resolution" value="1.80 A"/>
    <property type="chains" value="A=1-276"/>
</dbReference>
<dbReference type="PDB" id="3RQ5">
    <property type="method" value="X-ray"/>
    <property type="resolution" value="1.70 A"/>
    <property type="chains" value="A=1-276"/>
</dbReference>
<dbReference type="PDB" id="3RQ6">
    <property type="method" value="X-ray"/>
    <property type="resolution" value="1.65 A"/>
    <property type="chains" value="A=1-276"/>
</dbReference>
<dbReference type="PDB" id="3RQ8">
    <property type="method" value="X-ray"/>
    <property type="resolution" value="1.90 A"/>
    <property type="chains" value="A=1-276"/>
</dbReference>
<dbReference type="PDB" id="3RQH">
    <property type="method" value="X-ray"/>
    <property type="resolution" value="1.75 A"/>
    <property type="chains" value="A=1-276"/>
</dbReference>
<dbReference type="PDB" id="3RQQ">
    <property type="method" value="X-ray"/>
    <property type="resolution" value="1.60 A"/>
    <property type="chains" value="A=1-276"/>
</dbReference>
<dbReference type="PDB" id="3RQX">
    <property type="method" value="X-ray"/>
    <property type="resolution" value="1.60 A"/>
    <property type="chains" value="A=1-276"/>
</dbReference>
<dbReference type="PDBsum" id="1KYH"/>
<dbReference type="PDBsum" id="3RPH"/>
<dbReference type="PDBsum" id="3RPZ"/>
<dbReference type="PDBsum" id="3RQ2"/>
<dbReference type="PDBsum" id="3RQ5"/>
<dbReference type="PDBsum" id="3RQ6"/>
<dbReference type="PDBsum" id="3RQ8"/>
<dbReference type="PDBsum" id="3RQH"/>
<dbReference type="PDBsum" id="3RQQ"/>
<dbReference type="PDBsum" id="3RQX"/>
<dbReference type="SMR" id="P94368"/>
<dbReference type="DIP" id="DIP-59951N"/>
<dbReference type="FunCoup" id="P94368">
    <property type="interactions" value="228"/>
</dbReference>
<dbReference type="STRING" id="224308.BSU38720"/>
<dbReference type="PaxDb" id="224308-BSU38720"/>
<dbReference type="DNASU" id="937408"/>
<dbReference type="EnsemblBacteria" id="CAB15898">
    <property type="protein sequence ID" value="CAB15898"/>
    <property type="gene ID" value="BSU_38720"/>
</dbReference>
<dbReference type="GeneID" id="937408"/>
<dbReference type="KEGG" id="bsu:BSU38720"/>
<dbReference type="PATRIC" id="fig|224308.179.peg.4191"/>
<dbReference type="eggNOG" id="COG0063">
    <property type="taxonomic scope" value="Bacteria"/>
</dbReference>
<dbReference type="InParanoid" id="P94368"/>
<dbReference type="OrthoDB" id="9806925at2"/>
<dbReference type="PhylomeDB" id="P94368"/>
<dbReference type="BioCyc" id="BSUB:BSU38720-MONOMER"/>
<dbReference type="BRENDA" id="4.2.1.136">
    <property type="organism ID" value="658"/>
</dbReference>
<dbReference type="BRENDA" id="4.2.1.93">
    <property type="organism ID" value="658"/>
</dbReference>
<dbReference type="EvolutionaryTrace" id="P94368"/>
<dbReference type="Proteomes" id="UP000001570">
    <property type="component" value="Chromosome"/>
</dbReference>
<dbReference type="GO" id="GO:0052855">
    <property type="term" value="F:ADP-dependent NAD(P)H-hydrate dehydratase activity"/>
    <property type="evidence" value="ECO:0000318"/>
    <property type="project" value="GO_Central"/>
</dbReference>
<dbReference type="GO" id="GO:0005524">
    <property type="term" value="F:ATP binding"/>
    <property type="evidence" value="ECO:0007669"/>
    <property type="project" value="UniProtKB-KW"/>
</dbReference>
<dbReference type="GO" id="GO:0052856">
    <property type="term" value="F:NAD(P)HX epimerase activity"/>
    <property type="evidence" value="ECO:0000318"/>
    <property type="project" value="GO_Central"/>
</dbReference>
<dbReference type="GO" id="GO:0110051">
    <property type="term" value="P:metabolite repair"/>
    <property type="evidence" value="ECO:0000318"/>
    <property type="project" value="GO_Central"/>
</dbReference>
<dbReference type="GO" id="GO:0046496">
    <property type="term" value="P:nicotinamide nucleotide metabolic process"/>
    <property type="evidence" value="ECO:0007669"/>
    <property type="project" value="UniProtKB-UniRule"/>
</dbReference>
<dbReference type="CDD" id="cd01171">
    <property type="entry name" value="YXKO-related"/>
    <property type="match status" value="1"/>
</dbReference>
<dbReference type="FunFam" id="3.40.1190.20:FF:000114">
    <property type="entry name" value="ADP-dependent (S)-NAD(P)H-hydrate dehydratase"/>
    <property type="match status" value="1"/>
</dbReference>
<dbReference type="Gene3D" id="3.40.1190.20">
    <property type="match status" value="1"/>
</dbReference>
<dbReference type="HAMAP" id="MF_01965">
    <property type="entry name" value="NADHX_dehydratase"/>
    <property type="match status" value="1"/>
</dbReference>
<dbReference type="InterPro" id="IPR017953">
    <property type="entry name" value="Carbohydrate_kinase_pred_CS"/>
</dbReference>
<dbReference type="InterPro" id="IPR000631">
    <property type="entry name" value="CARKD"/>
</dbReference>
<dbReference type="InterPro" id="IPR029056">
    <property type="entry name" value="Ribokinase-like"/>
</dbReference>
<dbReference type="NCBIfam" id="TIGR00196">
    <property type="entry name" value="yjeF_cterm"/>
    <property type="match status" value="1"/>
</dbReference>
<dbReference type="PANTHER" id="PTHR12592:SF0">
    <property type="entry name" value="ATP-DEPENDENT (S)-NAD(P)H-HYDRATE DEHYDRATASE"/>
    <property type="match status" value="1"/>
</dbReference>
<dbReference type="PANTHER" id="PTHR12592">
    <property type="entry name" value="ATP-DEPENDENT (S)-NAD(P)H-HYDRATE DEHYDRATASE FAMILY MEMBER"/>
    <property type="match status" value="1"/>
</dbReference>
<dbReference type="Pfam" id="PF01256">
    <property type="entry name" value="Carb_kinase"/>
    <property type="match status" value="1"/>
</dbReference>
<dbReference type="SUPFAM" id="SSF53613">
    <property type="entry name" value="Ribokinase-like"/>
    <property type="match status" value="1"/>
</dbReference>
<dbReference type="PROSITE" id="PS01049">
    <property type="entry name" value="YJEF_C_1"/>
    <property type="match status" value="1"/>
</dbReference>
<dbReference type="PROSITE" id="PS01050">
    <property type="entry name" value="YJEF_C_2"/>
    <property type="match status" value="1"/>
</dbReference>
<dbReference type="PROSITE" id="PS51383">
    <property type="entry name" value="YJEF_C_3"/>
    <property type="match status" value="1"/>
</dbReference>
<accession>P94368</accession>
<proteinExistence type="evidence at protein level"/>
<gene>
    <name evidence="1" type="primary">nnrD</name>
    <name type="synonym">yxkO</name>
    <name type="ordered locus">BSU38720</name>
</gene>
<comment type="function">
    <text evidence="1 3">Catalyzes the dehydration of the S-form of NAD(P)HX at the expense of ADP, which is converted to AMP. Together with NAD(P)HX epimerase, which catalyzes the epimerization of the S- and R-forms, the enzyme allows the repair of both epimers of NAD(P)HX, a damaged form of NAD(P)H that is a result of enzymatic or heat-dependent hydration.</text>
</comment>
<comment type="catalytic activity">
    <reaction evidence="1 3">
        <text>(6S)-NADHX + ADP = AMP + phosphate + NADH + H(+)</text>
        <dbReference type="Rhea" id="RHEA:32223"/>
        <dbReference type="ChEBI" id="CHEBI:15378"/>
        <dbReference type="ChEBI" id="CHEBI:43474"/>
        <dbReference type="ChEBI" id="CHEBI:57945"/>
        <dbReference type="ChEBI" id="CHEBI:64074"/>
        <dbReference type="ChEBI" id="CHEBI:456215"/>
        <dbReference type="ChEBI" id="CHEBI:456216"/>
        <dbReference type="EC" id="4.2.1.136"/>
    </reaction>
    <physiologicalReaction direction="left-to-right" evidence="4">
        <dbReference type="Rhea" id="RHEA:32224"/>
    </physiologicalReaction>
</comment>
<comment type="catalytic activity">
    <reaction evidence="1 3">
        <text>(6S)-NADPHX + ADP = AMP + phosphate + NADPH + H(+)</text>
        <dbReference type="Rhea" id="RHEA:32235"/>
        <dbReference type="ChEBI" id="CHEBI:15378"/>
        <dbReference type="ChEBI" id="CHEBI:43474"/>
        <dbReference type="ChEBI" id="CHEBI:57783"/>
        <dbReference type="ChEBI" id="CHEBI:64076"/>
        <dbReference type="ChEBI" id="CHEBI:456215"/>
        <dbReference type="ChEBI" id="CHEBI:456216"/>
        <dbReference type="EC" id="4.2.1.136"/>
    </reaction>
    <physiologicalReaction direction="left-to-right" evidence="4">
        <dbReference type="Rhea" id="RHEA:32236"/>
    </physiologicalReaction>
</comment>
<comment type="cofactor">
    <cofactor evidence="1 3">
        <name>Mg(2+)</name>
        <dbReference type="ChEBI" id="CHEBI:18420"/>
    </cofactor>
</comment>
<comment type="biophysicochemical properties">
    <kinetics>
        <KM evidence="3">0.3 uM for NADHX</KM>
        <KM evidence="3">6.43 uM for ADP</KM>
        <text evidence="3">kcat is 0.35 sec(-1) for the ADP-dependent dehydration of NADHX.</text>
    </kinetics>
</comment>
<comment type="subunit">
    <text evidence="1 2 3">Homotetramer.</text>
</comment>
<comment type="similarity">
    <text evidence="1">Belongs to the NnrD/CARKD family.</text>
</comment>
<protein>
    <recommendedName>
        <fullName evidence="1">ADP-dependent (S)-NAD(P)H-hydrate dehydratase</fullName>
        <ecNumber evidence="1">4.2.1.136</ecNumber>
    </recommendedName>
    <alternativeName>
        <fullName evidence="1">ADP-dependent NAD(P)HX dehydratase</fullName>
    </alternativeName>
</protein>
<feature type="chain" id="PRO_0000119046" description="ADP-dependent (S)-NAD(P)H-hydrate dehydratase">
    <location>
        <begin position="1"/>
        <end position="276"/>
    </location>
</feature>
<feature type="domain" description="YjeF C-terminal" evidence="1">
    <location>
        <begin position="7"/>
        <end position="275"/>
    </location>
</feature>
<feature type="binding site" evidence="3 7">
    <location>
        <position position="42"/>
    </location>
    <ligand>
        <name>(6S)-NADPHX</name>
        <dbReference type="ChEBI" id="CHEBI:64076"/>
    </ligand>
</feature>
<feature type="binding site" evidence="3 7">
    <location>
        <position position="104"/>
    </location>
    <ligand>
        <name>(6S)-NADPHX</name>
        <dbReference type="ChEBI" id="CHEBI:64076"/>
    </ligand>
</feature>
<feature type="binding site" evidence="3 7">
    <location>
        <position position="149"/>
    </location>
    <ligand>
        <name>(6S)-NADPHX</name>
        <dbReference type="ChEBI" id="CHEBI:64076"/>
    </ligand>
</feature>
<feature type="binding site" evidence="3 7">
    <location>
        <begin position="186"/>
        <end position="190"/>
    </location>
    <ligand>
        <name>AMP</name>
        <dbReference type="ChEBI" id="CHEBI:456215"/>
    </ligand>
</feature>
<feature type="binding site" evidence="3 7">
    <location>
        <position position="215"/>
    </location>
    <ligand>
        <name>AMP</name>
        <dbReference type="ChEBI" id="CHEBI:456215"/>
    </ligand>
</feature>
<feature type="binding site" evidence="3 7">
    <location>
        <position position="216"/>
    </location>
    <ligand>
        <name>(6S)-NADPHX</name>
        <dbReference type="ChEBI" id="CHEBI:64076"/>
    </ligand>
</feature>
<feature type="helix" evidence="16">
    <location>
        <begin position="8"/>
        <end position="14"/>
    </location>
</feature>
<feature type="helix" evidence="16">
    <location>
        <begin position="24"/>
        <end position="27"/>
    </location>
</feature>
<feature type="strand" evidence="16">
    <location>
        <begin position="29"/>
        <end position="33"/>
    </location>
</feature>
<feature type="strand" evidence="18">
    <location>
        <begin position="37"/>
        <end position="39"/>
    </location>
</feature>
<feature type="helix" evidence="16">
    <location>
        <begin position="41"/>
        <end position="51"/>
    </location>
</feature>
<feature type="turn" evidence="16">
    <location>
        <begin position="52"/>
        <end position="54"/>
    </location>
</feature>
<feature type="strand" evidence="16">
    <location>
        <begin position="56"/>
        <end position="62"/>
    </location>
</feature>
<feature type="turn" evidence="16">
    <location>
        <begin position="64"/>
        <end position="66"/>
    </location>
</feature>
<feature type="helix" evidence="16">
    <location>
        <begin position="67"/>
        <end position="70"/>
    </location>
</feature>
<feature type="turn" evidence="16">
    <location>
        <begin position="71"/>
        <end position="73"/>
    </location>
</feature>
<feature type="strand" evidence="16">
    <location>
        <begin position="78"/>
        <end position="81"/>
    </location>
</feature>
<feature type="helix" evidence="16">
    <location>
        <begin position="83"/>
        <end position="86"/>
    </location>
</feature>
<feature type="turn" evidence="16">
    <location>
        <begin position="87"/>
        <end position="89"/>
    </location>
</feature>
<feature type="strand" evidence="16">
    <location>
        <begin position="97"/>
        <end position="101"/>
    </location>
</feature>
<feature type="helix" evidence="16">
    <location>
        <begin position="109"/>
        <end position="118"/>
    </location>
</feature>
<feature type="strand" evidence="16">
    <location>
        <begin position="121"/>
        <end position="123"/>
    </location>
</feature>
<feature type="strand" evidence="16">
    <location>
        <begin position="125"/>
        <end position="127"/>
    </location>
</feature>
<feature type="helix" evidence="16">
    <location>
        <begin position="129"/>
        <end position="131"/>
    </location>
</feature>
<feature type="strand" evidence="16">
    <location>
        <begin position="144"/>
        <end position="146"/>
    </location>
</feature>
<feature type="helix" evidence="16">
    <location>
        <begin position="150"/>
        <end position="157"/>
    </location>
</feature>
<feature type="helix" evidence="16">
    <location>
        <begin position="161"/>
        <end position="164"/>
    </location>
</feature>
<feature type="helix" evidence="16">
    <location>
        <begin position="168"/>
        <end position="179"/>
    </location>
</feature>
<feature type="strand" evidence="16">
    <location>
        <begin position="181"/>
        <end position="185"/>
    </location>
</feature>
<feature type="strand" evidence="17">
    <location>
        <begin position="187"/>
        <end position="189"/>
    </location>
</feature>
<feature type="strand" evidence="16">
    <location>
        <begin position="191"/>
        <end position="193"/>
    </location>
</feature>
<feature type="strand" evidence="16">
    <location>
        <begin position="199"/>
        <end position="201"/>
    </location>
</feature>
<feature type="helix" evidence="16">
    <location>
        <begin position="207"/>
        <end position="209"/>
    </location>
</feature>
<feature type="helix" evidence="16">
    <location>
        <begin position="214"/>
        <end position="228"/>
    </location>
</feature>
<feature type="helix" evidence="16">
    <location>
        <begin position="232"/>
        <end position="253"/>
    </location>
</feature>
<feature type="helix" evidence="15">
    <location>
        <begin position="256"/>
        <end position="258"/>
    </location>
</feature>
<feature type="helix" evidence="16">
    <location>
        <begin position="261"/>
        <end position="274"/>
    </location>
</feature>
<name>NNRD_BACSU</name>
<organism>
    <name type="scientific">Bacillus subtilis (strain 168)</name>
    <dbReference type="NCBI Taxonomy" id="224308"/>
    <lineage>
        <taxon>Bacteria</taxon>
        <taxon>Bacillati</taxon>
        <taxon>Bacillota</taxon>
        <taxon>Bacilli</taxon>
        <taxon>Bacillales</taxon>
        <taxon>Bacillaceae</taxon>
        <taxon>Bacillus</taxon>
    </lineage>
</organism>